<accession>B4RK11</accession>
<proteinExistence type="inferred from homology"/>
<name>UBIE_NEIG2</name>
<feature type="chain" id="PRO_1000187781" description="Ubiquinone/menaquinone biosynthesis C-methyltransferase UbiE">
    <location>
        <begin position="1"/>
        <end position="245"/>
    </location>
</feature>
<feature type="binding site" evidence="1">
    <location>
        <position position="71"/>
    </location>
    <ligand>
        <name>S-adenosyl-L-methionine</name>
        <dbReference type="ChEBI" id="CHEBI:59789"/>
    </ligand>
</feature>
<feature type="binding site" evidence="1">
    <location>
        <position position="92"/>
    </location>
    <ligand>
        <name>S-adenosyl-L-methionine</name>
        <dbReference type="ChEBI" id="CHEBI:59789"/>
    </ligand>
</feature>
<feature type="binding site" evidence="1">
    <location>
        <begin position="118"/>
        <end position="119"/>
    </location>
    <ligand>
        <name>S-adenosyl-L-methionine</name>
        <dbReference type="ChEBI" id="CHEBI:59789"/>
    </ligand>
</feature>
<reference key="1">
    <citation type="journal article" date="2008" name="J. Bacteriol.">
        <title>Complete genome sequence of Neisseria gonorrhoeae NCCP11945.</title>
        <authorList>
            <person name="Chung G.T."/>
            <person name="Yoo J.S."/>
            <person name="Oh H.B."/>
            <person name="Lee Y.S."/>
            <person name="Cha S.H."/>
            <person name="Kim S.J."/>
            <person name="Yoo C.K."/>
        </authorList>
    </citation>
    <scope>NUCLEOTIDE SEQUENCE [LARGE SCALE GENOMIC DNA]</scope>
    <source>
        <strain>NCCP11945</strain>
    </source>
</reference>
<organism>
    <name type="scientific">Neisseria gonorrhoeae (strain NCCP11945)</name>
    <dbReference type="NCBI Taxonomy" id="521006"/>
    <lineage>
        <taxon>Bacteria</taxon>
        <taxon>Pseudomonadati</taxon>
        <taxon>Pseudomonadota</taxon>
        <taxon>Betaproteobacteria</taxon>
        <taxon>Neisseriales</taxon>
        <taxon>Neisseriaceae</taxon>
        <taxon>Neisseria</taxon>
    </lineage>
</organism>
<keyword id="KW-0474">Menaquinone biosynthesis</keyword>
<keyword id="KW-0489">Methyltransferase</keyword>
<keyword id="KW-0949">S-adenosyl-L-methionine</keyword>
<keyword id="KW-0808">Transferase</keyword>
<keyword id="KW-0831">Ubiquinone biosynthesis</keyword>
<sequence length="245" mass="27401">MGGQKTHFGFSTVNEDEKAGKVAEVFHSVAKNYDIMNDVMSAGLHRVWKHFTIHTAHLKKGDKVLDIAGGTGDLSRGWAKRVGKEGEVWLTDINSSMLTVGRDRLLNEGMILPVSLADAEKLPFPDNYFNLVSVAFGLRNMTYKDAALKEMYRVLKPGGTLLVLEFSKIYKPLEGAYDFYSFKLLPVMGRLIAKDADSYQYLAESIRMHPDQETLKQMMLDAGFDSVDYHNMSAGIVALHKGVKF</sequence>
<dbReference type="EC" id="2.1.1.163" evidence="1"/>
<dbReference type="EC" id="2.1.1.201" evidence="1"/>
<dbReference type="EMBL" id="CP001050">
    <property type="protein sequence ID" value="ACF29162.1"/>
    <property type="molecule type" value="Genomic_DNA"/>
</dbReference>
<dbReference type="RefSeq" id="WP_003687710.1">
    <property type="nucleotide sequence ID" value="NC_011035.1"/>
</dbReference>
<dbReference type="SMR" id="B4RK11"/>
<dbReference type="GeneID" id="66752661"/>
<dbReference type="KEGG" id="ngk:NGK_0471"/>
<dbReference type="HOGENOM" id="CLU_037990_0_0_4"/>
<dbReference type="UniPathway" id="UPA00079">
    <property type="reaction ID" value="UER00169"/>
</dbReference>
<dbReference type="UniPathway" id="UPA00232"/>
<dbReference type="Proteomes" id="UP000002564">
    <property type="component" value="Chromosome"/>
</dbReference>
<dbReference type="GO" id="GO:0008425">
    <property type="term" value="F:2-methoxy-6-polyprenyl-1,4-benzoquinol methyltransferase activity"/>
    <property type="evidence" value="ECO:0007669"/>
    <property type="project" value="UniProtKB-UniRule"/>
</dbReference>
<dbReference type="GO" id="GO:0043770">
    <property type="term" value="F:demethylmenaquinone methyltransferase activity"/>
    <property type="evidence" value="ECO:0007669"/>
    <property type="project" value="UniProtKB-UniRule"/>
</dbReference>
<dbReference type="GO" id="GO:0009060">
    <property type="term" value="P:aerobic respiration"/>
    <property type="evidence" value="ECO:0007669"/>
    <property type="project" value="UniProtKB-UniRule"/>
</dbReference>
<dbReference type="GO" id="GO:0009234">
    <property type="term" value="P:menaquinone biosynthetic process"/>
    <property type="evidence" value="ECO:0007669"/>
    <property type="project" value="UniProtKB-UniRule"/>
</dbReference>
<dbReference type="GO" id="GO:0032259">
    <property type="term" value="P:methylation"/>
    <property type="evidence" value="ECO:0007669"/>
    <property type="project" value="UniProtKB-KW"/>
</dbReference>
<dbReference type="CDD" id="cd02440">
    <property type="entry name" value="AdoMet_MTases"/>
    <property type="match status" value="1"/>
</dbReference>
<dbReference type="Gene3D" id="3.40.50.150">
    <property type="entry name" value="Vaccinia Virus protein VP39"/>
    <property type="match status" value="1"/>
</dbReference>
<dbReference type="HAMAP" id="MF_01813">
    <property type="entry name" value="MenG_UbiE_methyltr"/>
    <property type="match status" value="1"/>
</dbReference>
<dbReference type="InterPro" id="IPR029063">
    <property type="entry name" value="SAM-dependent_MTases_sf"/>
</dbReference>
<dbReference type="InterPro" id="IPR004033">
    <property type="entry name" value="UbiE/COQ5_MeTrFase"/>
</dbReference>
<dbReference type="InterPro" id="IPR023576">
    <property type="entry name" value="UbiE/COQ5_MeTrFase_CS"/>
</dbReference>
<dbReference type="NCBIfam" id="TIGR01934">
    <property type="entry name" value="MenG_MenH_UbiE"/>
    <property type="match status" value="1"/>
</dbReference>
<dbReference type="NCBIfam" id="NF001240">
    <property type="entry name" value="PRK00216.1-1"/>
    <property type="match status" value="1"/>
</dbReference>
<dbReference type="NCBIfam" id="NF001244">
    <property type="entry name" value="PRK00216.1-5"/>
    <property type="match status" value="1"/>
</dbReference>
<dbReference type="PANTHER" id="PTHR43591:SF24">
    <property type="entry name" value="2-METHOXY-6-POLYPRENYL-1,4-BENZOQUINOL METHYLASE, MITOCHONDRIAL"/>
    <property type="match status" value="1"/>
</dbReference>
<dbReference type="PANTHER" id="PTHR43591">
    <property type="entry name" value="METHYLTRANSFERASE"/>
    <property type="match status" value="1"/>
</dbReference>
<dbReference type="Pfam" id="PF01209">
    <property type="entry name" value="Ubie_methyltran"/>
    <property type="match status" value="1"/>
</dbReference>
<dbReference type="SUPFAM" id="SSF53335">
    <property type="entry name" value="S-adenosyl-L-methionine-dependent methyltransferases"/>
    <property type="match status" value="1"/>
</dbReference>
<dbReference type="PROSITE" id="PS51608">
    <property type="entry name" value="SAM_MT_UBIE"/>
    <property type="match status" value="1"/>
</dbReference>
<dbReference type="PROSITE" id="PS01183">
    <property type="entry name" value="UBIE_1"/>
    <property type="match status" value="1"/>
</dbReference>
<dbReference type="PROSITE" id="PS01184">
    <property type="entry name" value="UBIE_2"/>
    <property type="match status" value="1"/>
</dbReference>
<comment type="function">
    <text evidence="1">Methyltransferase required for the conversion of demethylmenaquinol (DMKH2) to menaquinol (MKH2) and the conversion of 2-polyprenyl-6-methoxy-1,4-benzoquinol (DDMQH2) to 2-polyprenyl-3-methyl-6-methoxy-1,4-benzoquinol (DMQH2).</text>
</comment>
<comment type="catalytic activity">
    <reaction evidence="1">
        <text>a 2-demethylmenaquinol + S-adenosyl-L-methionine = a menaquinol + S-adenosyl-L-homocysteine + H(+)</text>
        <dbReference type="Rhea" id="RHEA:42640"/>
        <dbReference type="Rhea" id="RHEA-COMP:9539"/>
        <dbReference type="Rhea" id="RHEA-COMP:9563"/>
        <dbReference type="ChEBI" id="CHEBI:15378"/>
        <dbReference type="ChEBI" id="CHEBI:18151"/>
        <dbReference type="ChEBI" id="CHEBI:55437"/>
        <dbReference type="ChEBI" id="CHEBI:57856"/>
        <dbReference type="ChEBI" id="CHEBI:59789"/>
        <dbReference type="EC" id="2.1.1.163"/>
    </reaction>
</comment>
<comment type="catalytic activity">
    <reaction evidence="1">
        <text>a 2-methoxy-6-(all-trans-polyprenyl)benzene-1,4-diol + S-adenosyl-L-methionine = a 5-methoxy-2-methyl-3-(all-trans-polyprenyl)benzene-1,4-diol + S-adenosyl-L-homocysteine + H(+)</text>
        <dbReference type="Rhea" id="RHEA:28286"/>
        <dbReference type="Rhea" id="RHEA-COMP:10858"/>
        <dbReference type="Rhea" id="RHEA-COMP:10859"/>
        <dbReference type="ChEBI" id="CHEBI:15378"/>
        <dbReference type="ChEBI" id="CHEBI:57856"/>
        <dbReference type="ChEBI" id="CHEBI:59789"/>
        <dbReference type="ChEBI" id="CHEBI:84166"/>
        <dbReference type="ChEBI" id="CHEBI:84167"/>
        <dbReference type="EC" id="2.1.1.201"/>
    </reaction>
</comment>
<comment type="pathway">
    <text evidence="1">Quinol/quinone metabolism; menaquinone biosynthesis; menaquinol from 1,4-dihydroxy-2-naphthoate: step 2/2.</text>
</comment>
<comment type="pathway">
    <text evidence="1">Cofactor biosynthesis; ubiquinone biosynthesis.</text>
</comment>
<comment type="similarity">
    <text evidence="1">Belongs to the class I-like SAM-binding methyltransferase superfamily. MenG/UbiE family.</text>
</comment>
<protein>
    <recommendedName>
        <fullName evidence="1">Ubiquinone/menaquinone biosynthesis C-methyltransferase UbiE</fullName>
        <ecNumber evidence="1">2.1.1.163</ecNumber>
        <ecNumber evidence="1">2.1.1.201</ecNumber>
    </recommendedName>
    <alternativeName>
        <fullName evidence="1">2-methoxy-6-polyprenyl-1,4-benzoquinol methylase</fullName>
    </alternativeName>
    <alternativeName>
        <fullName evidence="1">Demethylmenaquinone methyltransferase</fullName>
    </alternativeName>
</protein>
<gene>
    <name evidence="1" type="primary">ubiE</name>
    <name type="ordered locus">NGK_0471</name>
</gene>
<evidence type="ECO:0000255" key="1">
    <source>
        <dbReference type="HAMAP-Rule" id="MF_01813"/>
    </source>
</evidence>